<feature type="chain" id="PRO_0000109043" description="UDP-N-acetylmuramoylalanine--D-glutamate ligase">
    <location>
        <begin position="1"/>
        <end position="496"/>
    </location>
</feature>
<feature type="binding site" evidence="2">
    <location>
        <begin position="130"/>
        <end position="136"/>
    </location>
    <ligand>
        <name>ATP</name>
        <dbReference type="ChEBI" id="CHEBI:30616"/>
    </ligand>
</feature>
<accession>Q7VEP7</accession>
<accession>A0A1R3Y0S5</accession>
<accession>X2BKB2</accession>
<protein>
    <recommendedName>
        <fullName evidence="2">UDP-N-acetylmuramoylalanine--D-glutamate ligase</fullName>
        <ecNumber evidence="2">6.3.2.9</ecNumber>
    </recommendedName>
    <alternativeName>
        <fullName evidence="2">D-glutamic acid-adding enzyme</fullName>
    </alternativeName>
    <alternativeName>
        <fullName evidence="2">UDP-N-acetylmuramoyl-L-alanyl-D-glutamate synthetase</fullName>
    </alternativeName>
</protein>
<evidence type="ECO:0000250" key="1">
    <source>
        <dbReference type="UniProtKB" id="P9WJL5"/>
    </source>
</evidence>
<evidence type="ECO:0000255" key="2">
    <source>
        <dbReference type="HAMAP-Rule" id="MF_00639"/>
    </source>
</evidence>
<comment type="function">
    <text evidence="2">Cell wall formation. Catalyzes the addition of glutamate to the nucleotide precursor UDP-N-acetylmuramoyl-L-alanine (UMA).</text>
</comment>
<comment type="catalytic activity">
    <reaction evidence="2">
        <text>UDP-N-acetyl-alpha-D-muramoyl-L-alanine + D-glutamate + ATP = UDP-N-acetyl-alpha-D-muramoyl-L-alanyl-D-glutamate + ADP + phosphate + H(+)</text>
        <dbReference type="Rhea" id="RHEA:16429"/>
        <dbReference type="ChEBI" id="CHEBI:15378"/>
        <dbReference type="ChEBI" id="CHEBI:29986"/>
        <dbReference type="ChEBI" id="CHEBI:30616"/>
        <dbReference type="ChEBI" id="CHEBI:43474"/>
        <dbReference type="ChEBI" id="CHEBI:83898"/>
        <dbReference type="ChEBI" id="CHEBI:83900"/>
        <dbReference type="ChEBI" id="CHEBI:456216"/>
        <dbReference type="EC" id="6.3.2.9"/>
    </reaction>
</comment>
<comment type="pathway">
    <text evidence="2">Cell wall biogenesis; peptidoglycan biosynthesis.</text>
</comment>
<comment type="subcellular location">
    <subcellularLocation>
        <location evidence="2">Cytoplasm</location>
    </subcellularLocation>
</comment>
<comment type="similarity">
    <text evidence="2">Belongs to the MurCDEF family.</text>
</comment>
<comment type="sequence caution" evidence="1">
    <conflict type="erroneous initiation">
        <sequence resource="EMBL-CDS" id="SIU00787"/>
    </conflict>
    <text>Truncated N-terminus.</text>
</comment>
<sequence>MSGLPRSVPDVLDPLGPGAPVLVAGGRVTGQAVAAVLTRFGATPTVCDDDPVMLRPHAERGLPTVSSSDAVQQITGYALVVASPGFSPATPLLAAAAAAGVPIWGDVELAWRLDAAGCYGPPRSWLVVTGTNGKTTTTSMLHAMLIAGGRRAVLCGNIGSAVLDVLDEPAELLAVELSSFQLHWAPSLRPEAGAVLNIAEDHLDWHATMAEYTAAKARVLTGGVAVAGLDDSRAAALLDGSPAQVRVGFRLGEPAAGELGVRDAHLVDRAFSDDLTLLPVASIPVPGPVGVLDALAAAALARSVGVPAGAIADAVTSFRVGRHRAEVVAVADGITYVDDSKATNPHAARASVLAYPRVVWIAGGLLKGASLHAEVAAMASRLVGAVLIGRDRAAVAEALSRHAPDVPVVQVVAGEDTGMPATVEVPVACVLDVAKDDKAGETVGAAVMTAAVAAARRMAQPGDTVLLAPAGASFDQFTGYADRGEAFATAVRAVIR</sequence>
<keyword id="KW-0067">ATP-binding</keyword>
<keyword id="KW-0131">Cell cycle</keyword>
<keyword id="KW-0132">Cell division</keyword>
<keyword id="KW-0133">Cell shape</keyword>
<keyword id="KW-0961">Cell wall biogenesis/degradation</keyword>
<keyword id="KW-0963">Cytoplasm</keyword>
<keyword id="KW-0436">Ligase</keyword>
<keyword id="KW-0547">Nucleotide-binding</keyword>
<keyword id="KW-0573">Peptidoglycan synthesis</keyword>
<keyword id="KW-1185">Reference proteome</keyword>
<gene>
    <name evidence="2" type="primary">murD</name>
    <name type="ordered locus">BQ2027_MB2179C</name>
</gene>
<name>MURD_MYCBO</name>
<dbReference type="EC" id="6.3.2.9" evidence="2"/>
<dbReference type="EMBL" id="LT708304">
    <property type="protein sequence ID" value="SIU00787.1"/>
    <property type="status" value="ALT_INIT"/>
    <property type="molecule type" value="Genomic_DNA"/>
</dbReference>
<dbReference type="RefSeq" id="NP_855828.1">
    <property type="nucleotide sequence ID" value="NC_002945.3"/>
</dbReference>
<dbReference type="SMR" id="Q7VEP7"/>
<dbReference type="KEGG" id="mbo:BQ2027_MB2179C"/>
<dbReference type="PATRIC" id="fig|233413.5.peg.2395"/>
<dbReference type="UniPathway" id="UPA00219"/>
<dbReference type="Proteomes" id="UP000001419">
    <property type="component" value="Chromosome"/>
</dbReference>
<dbReference type="GO" id="GO:0005737">
    <property type="term" value="C:cytoplasm"/>
    <property type="evidence" value="ECO:0007669"/>
    <property type="project" value="UniProtKB-SubCell"/>
</dbReference>
<dbReference type="GO" id="GO:0005524">
    <property type="term" value="F:ATP binding"/>
    <property type="evidence" value="ECO:0007669"/>
    <property type="project" value="UniProtKB-UniRule"/>
</dbReference>
<dbReference type="GO" id="GO:0008764">
    <property type="term" value="F:UDP-N-acetylmuramoylalanine-D-glutamate ligase activity"/>
    <property type="evidence" value="ECO:0007669"/>
    <property type="project" value="UniProtKB-UniRule"/>
</dbReference>
<dbReference type="GO" id="GO:0051301">
    <property type="term" value="P:cell division"/>
    <property type="evidence" value="ECO:0007669"/>
    <property type="project" value="UniProtKB-KW"/>
</dbReference>
<dbReference type="GO" id="GO:0071555">
    <property type="term" value="P:cell wall organization"/>
    <property type="evidence" value="ECO:0007669"/>
    <property type="project" value="UniProtKB-KW"/>
</dbReference>
<dbReference type="GO" id="GO:0009252">
    <property type="term" value="P:peptidoglycan biosynthetic process"/>
    <property type="evidence" value="ECO:0007669"/>
    <property type="project" value="UniProtKB-UniRule"/>
</dbReference>
<dbReference type="GO" id="GO:0008360">
    <property type="term" value="P:regulation of cell shape"/>
    <property type="evidence" value="ECO:0007669"/>
    <property type="project" value="UniProtKB-KW"/>
</dbReference>
<dbReference type="Gene3D" id="3.90.190.20">
    <property type="entry name" value="Mur ligase, C-terminal domain"/>
    <property type="match status" value="1"/>
</dbReference>
<dbReference type="Gene3D" id="3.40.1190.10">
    <property type="entry name" value="Mur-like, catalytic domain"/>
    <property type="match status" value="1"/>
</dbReference>
<dbReference type="Gene3D" id="3.40.50.720">
    <property type="entry name" value="NAD(P)-binding Rossmann-like Domain"/>
    <property type="match status" value="1"/>
</dbReference>
<dbReference type="HAMAP" id="MF_00639">
    <property type="entry name" value="MurD"/>
    <property type="match status" value="1"/>
</dbReference>
<dbReference type="InterPro" id="IPR036565">
    <property type="entry name" value="Mur-like_cat_sf"/>
</dbReference>
<dbReference type="InterPro" id="IPR004101">
    <property type="entry name" value="Mur_ligase_C"/>
</dbReference>
<dbReference type="InterPro" id="IPR036615">
    <property type="entry name" value="Mur_ligase_C_dom_sf"/>
</dbReference>
<dbReference type="InterPro" id="IPR013221">
    <property type="entry name" value="Mur_ligase_cen"/>
</dbReference>
<dbReference type="InterPro" id="IPR005762">
    <property type="entry name" value="MurD"/>
</dbReference>
<dbReference type="NCBIfam" id="TIGR01087">
    <property type="entry name" value="murD"/>
    <property type="match status" value="1"/>
</dbReference>
<dbReference type="PANTHER" id="PTHR43692">
    <property type="entry name" value="UDP-N-ACETYLMURAMOYLALANINE--D-GLUTAMATE LIGASE"/>
    <property type="match status" value="1"/>
</dbReference>
<dbReference type="PANTHER" id="PTHR43692:SF1">
    <property type="entry name" value="UDP-N-ACETYLMURAMOYLALANINE--D-GLUTAMATE LIGASE"/>
    <property type="match status" value="1"/>
</dbReference>
<dbReference type="Pfam" id="PF02875">
    <property type="entry name" value="Mur_ligase_C"/>
    <property type="match status" value="1"/>
</dbReference>
<dbReference type="Pfam" id="PF08245">
    <property type="entry name" value="Mur_ligase_M"/>
    <property type="match status" value="1"/>
</dbReference>
<dbReference type="SUPFAM" id="SSF51984">
    <property type="entry name" value="MurCD N-terminal domain"/>
    <property type="match status" value="1"/>
</dbReference>
<dbReference type="SUPFAM" id="SSF53623">
    <property type="entry name" value="MurD-like peptide ligases, catalytic domain"/>
    <property type="match status" value="1"/>
</dbReference>
<dbReference type="SUPFAM" id="SSF53244">
    <property type="entry name" value="MurD-like peptide ligases, peptide-binding domain"/>
    <property type="match status" value="1"/>
</dbReference>
<reference key="1">
    <citation type="journal article" date="2003" name="Proc. Natl. Acad. Sci. U.S.A.">
        <title>The complete genome sequence of Mycobacterium bovis.</title>
        <authorList>
            <person name="Garnier T."/>
            <person name="Eiglmeier K."/>
            <person name="Camus J.-C."/>
            <person name="Medina N."/>
            <person name="Mansoor H."/>
            <person name="Pryor M."/>
            <person name="Duthoy S."/>
            <person name="Grondin S."/>
            <person name="Lacroix C."/>
            <person name="Monsempe C."/>
            <person name="Simon S."/>
            <person name="Harris B."/>
            <person name="Atkin R."/>
            <person name="Doggett J."/>
            <person name="Mayes R."/>
            <person name="Keating L."/>
            <person name="Wheeler P.R."/>
            <person name="Parkhill J."/>
            <person name="Barrell B.G."/>
            <person name="Cole S.T."/>
            <person name="Gordon S.V."/>
            <person name="Hewinson R.G."/>
        </authorList>
    </citation>
    <scope>NUCLEOTIDE SEQUENCE [LARGE SCALE GENOMIC DNA]</scope>
    <source>
        <strain>ATCC BAA-935 / AF2122/97</strain>
    </source>
</reference>
<reference key="2">
    <citation type="journal article" date="2017" name="Genome Announc.">
        <title>Updated reference genome sequence and annotation of Mycobacterium bovis AF2122/97.</title>
        <authorList>
            <person name="Malone K.M."/>
            <person name="Farrell D."/>
            <person name="Stuber T.P."/>
            <person name="Schubert O.T."/>
            <person name="Aebersold R."/>
            <person name="Robbe-Austerman S."/>
            <person name="Gordon S.V."/>
        </authorList>
    </citation>
    <scope>NUCLEOTIDE SEQUENCE [LARGE SCALE GENOMIC DNA]</scope>
    <scope>GENOME REANNOTATION</scope>
    <source>
        <strain>ATCC BAA-935 / AF2122/97</strain>
    </source>
</reference>
<proteinExistence type="inferred from homology"/>
<organism>
    <name type="scientific">Mycobacterium bovis (strain ATCC BAA-935 / AF2122/97)</name>
    <dbReference type="NCBI Taxonomy" id="233413"/>
    <lineage>
        <taxon>Bacteria</taxon>
        <taxon>Bacillati</taxon>
        <taxon>Actinomycetota</taxon>
        <taxon>Actinomycetes</taxon>
        <taxon>Mycobacteriales</taxon>
        <taxon>Mycobacteriaceae</taxon>
        <taxon>Mycobacterium</taxon>
        <taxon>Mycobacterium tuberculosis complex</taxon>
    </lineage>
</organism>